<organism>
    <name type="scientific">Rhizorhabdus wittichii (strain DSM 6014 / CCUG 31198 / JCM 15750 / NBRC 105917 / EY 4224 / RW1)</name>
    <name type="common">Sphingomonas wittichii</name>
    <dbReference type="NCBI Taxonomy" id="392499"/>
    <lineage>
        <taxon>Bacteria</taxon>
        <taxon>Pseudomonadati</taxon>
        <taxon>Pseudomonadota</taxon>
        <taxon>Alphaproteobacteria</taxon>
        <taxon>Sphingomonadales</taxon>
        <taxon>Sphingomonadaceae</taxon>
        <taxon>Rhizorhabdus</taxon>
    </lineage>
</organism>
<reference key="1">
    <citation type="journal article" date="2010" name="J. Bacteriol.">
        <title>Genome sequence of the dioxin-mineralizing bacterium Sphingomonas wittichii RW1.</title>
        <authorList>
            <person name="Miller T.R."/>
            <person name="Delcher A.L."/>
            <person name="Salzberg S.L."/>
            <person name="Saunders E."/>
            <person name="Detter J.C."/>
            <person name="Halden R.U."/>
        </authorList>
    </citation>
    <scope>NUCLEOTIDE SEQUENCE [LARGE SCALE GENOMIC DNA]</scope>
    <source>
        <strain>DSM 6014 / CCUG 31198 / JCM 15750 / NBRC 105917 / EY 4224 / RW1</strain>
    </source>
</reference>
<accession>A5VEV8</accession>
<comment type="function">
    <text evidence="1">F(1)F(0) ATP synthase produces ATP from ADP in the presence of a proton or sodium gradient. F-type ATPases consist of two structural domains, F(1) containing the extramembraneous catalytic core and F(0) containing the membrane proton channel, linked together by a central stalk and a peripheral stalk. During catalysis, ATP synthesis in the catalytic domain of F(1) is coupled via a rotary mechanism of the central stalk subunits to proton translocation.</text>
</comment>
<comment type="function">
    <text evidence="1">Component of the F(0) channel, it forms part of the peripheral stalk, linking F(1) to F(0).</text>
</comment>
<comment type="subunit">
    <text evidence="1">F-type ATPases have 2 components, F(1) - the catalytic core - and F(0) - the membrane proton channel. F(1) has five subunits: alpha(3), beta(3), gamma(1), delta(1), epsilon(1). F(0) has three main subunits: a(1), b(2) and c(10-14). The alpha and beta chains form an alternating ring which encloses part of the gamma chain. F(1) is attached to F(0) by a central stalk formed by the gamma and epsilon chains, while a peripheral stalk is formed by the delta and b chains.</text>
</comment>
<comment type="subcellular location">
    <subcellularLocation>
        <location evidence="1">Cell inner membrane</location>
        <topology evidence="1">Single-pass membrane protein</topology>
    </subcellularLocation>
</comment>
<comment type="similarity">
    <text evidence="1">Belongs to the ATPase B chain family.</text>
</comment>
<sequence>MSVNASTLVADNLADAASLEGLPENVSAGHAAAGTEEHHVDPTALGMTATAWVSLAMVIVILLLLWKKVPSVIGASLDKKIASIRANLDEAAALRADAEKLKAEYEAKAKAAAKEAEEMLAHARSEAEAIVSQARVDATALIERRGKMAEDKIAAAERGAVAEVRAKAASAAAAAAGALIAERNNAKADKALIDGAIDALGNARF</sequence>
<feature type="chain" id="PRO_0000368780" description="ATP synthase subunit b">
    <location>
        <begin position="1"/>
        <end position="205"/>
    </location>
</feature>
<feature type="transmembrane region" description="Helical" evidence="1">
    <location>
        <begin position="45"/>
        <end position="65"/>
    </location>
</feature>
<protein>
    <recommendedName>
        <fullName evidence="1">ATP synthase subunit b</fullName>
    </recommendedName>
    <alternativeName>
        <fullName evidence="1">ATP synthase F(0) sector subunit b</fullName>
    </alternativeName>
    <alternativeName>
        <fullName evidence="1">ATPase subunit I</fullName>
    </alternativeName>
    <alternativeName>
        <fullName evidence="1">F-type ATPase subunit b</fullName>
        <shortName evidence="1">F-ATPase subunit b</shortName>
    </alternativeName>
</protein>
<gene>
    <name evidence="1" type="primary">atpF</name>
    <name type="ordered locus">Swit_4486</name>
</gene>
<dbReference type="EMBL" id="CP000699">
    <property type="protein sequence ID" value="ABQ70824.1"/>
    <property type="molecule type" value="Genomic_DNA"/>
</dbReference>
<dbReference type="SMR" id="A5VEV8"/>
<dbReference type="STRING" id="392499.Swit_4486"/>
<dbReference type="PaxDb" id="392499-Swit_4486"/>
<dbReference type="KEGG" id="swi:Swit_4486"/>
<dbReference type="eggNOG" id="COG0711">
    <property type="taxonomic scope" value="Bacteria"/>
</dbReference>
<dbReference type="HOGENOM" id="CLU_079215_6_0_5"/>
<dbReference type="Proteomes" id="UP000001989">
    <property type="component" value="Chromosome"/>
</dbReference>
<dbReference type="GO" id="GO:0005886">
    <property type="term" value="C:plasma membrane"/>
    <property type="evidence" value="ECO:0007669"/>
    <property type="project" value="UniProtKB-SubCell"/>
</dbReference>
<dbReference type="GO" id="GO:0045259">
    <property type="term" value="C:proton-transporting ATP synthase complex"/>
    <property type="evidence" value="ECO:0007669"/>
    <property type="project" value="UniProtKB-KW"/>
</dbReference>
<dbReference type="GO" id="GO:0046933">
    <property type="term" value="F:proton-transporting ATP synthase activity, rotational mechanism"/>
    <property type="evidence" value="ECO:0007669"/>
    <property type="project" value="UniProtKB-UniRule"/>
</dbReference>
<dbReference type="GO" id="GO:0046961">
    <property type="term" value="F:proton-transporting ATPase activity, rotational mechanism"/>
    <property type="evidence" value="ECO:0007669"/>
    <property type="project" value="TreeGrafter"/>
</dbReference>
<dbReference type="CDD" id="cd06503">
    <property type="entry name" value="ATP-synt_Fo_b"/>
    <property type="match status" value="1"/>
</dbReference>
<dbReference type="HAMAP" id="MF_01398">
    <property type="entry name" value="ATP_synth_b_bprime"/>
    <property type="match status" value="1"/>
</dbReference>
<dbReference type="InterPro" id="IPR002146">
    <property type="entry name" value="ATP_synth_b/b'su_bac/chlpt"/>
</dbReference>
<dbReference type="InterPro" id="IPR050059">
    <property type="entry name" value="ATP_synthase_B_chain"/>
</dbReference>
<dbReference type="PANTHER" id="PTHR33445:SF1">
    <property type="entry name" value="ATP SYNTHASE SUBUNIT B"/>
    <property type="match status" value="1"/>
</dbReference>
<dbReference type="PANTHER" id="PTHR33445">
    <property type="entry name" value="ATP SYNTHASE SUBUNIT B', CHLOROPLASTIC"/>
    <property type="match status" value="1"/>
</dbReference>
<dbReference type="Pfam" id="PF00430">
    <property type="entry name" value="ATP-synt_B"/>
    <property type="match status" value="1"/>
</dbReference>
<keyword id="KW-0066">ATP synthesis</keyword>
<keyword id="KW-0997">Cell inner membrane</keyword>
<keyword id="KW-1003">Cell membrane</keyword>
<keyword id="KW-0138">CF(0)</keyword>
<keyword id="KW-0375">Hydrogen ion transport</keyword>
<keyword id="KW-0406">Ion transport</keyword>
<keyword id="KW-0472">Membrane</keyword>
<keyword id="KW-1185">Reference proteome</keyword>
<keyword id="KW-0812">Transmembrane</keyword>
<keyword id="KW-1133">Transmembrane helix</keyword>
<keyword id="KW-0813">Transport</keyword>
<name>ATPF_RHIWR</name>
<proteinExistence type="inferred from homology"/>
<evidence type="ECO:0000255" key="1">
    <source>
        <dbReference type="HAMAP-Rule" id="MF_01398"/>
    </source>
</evidence>